<evidence type="ECO:0000250" key="1">
    <source>
        <dbReference type="UniProtKB" id="Q6NX65"/>
    </source>
</evidence>
<evidence type="ECO:0000250" key="2">
    <source>
        <dbReference type="UniProtKB" id="Q8VE70"/>
    </source>
</evidence>
<evidence type="ECO:0000250" key="3">
    <source>
        <dbReference type="UniProtKB" id="Q9BUL8"/>
    </source>
</evidence>
<evidence type="ECO:0000255" key="4"/>
<evidence type="ECO:0000269" key="5">
    <source>
    </source>
</evidence>
<evidence type="ECO:0000312" key="6">
    <source>
        <dbReference type="EMBL" id="AAH67550.1"/>
    </source>
</evidence>
<evidence type="ECO:0000312" key="7">
    <source>
        <dbReference type="ZFIN" id="ZDB-GENE-040426-2607"/>
    </source>
</evidence>
<organism>
    <name type="scientific">Danio rerio</name>
    <name type="common">Zebrafish</name>
    <name type="synonym">Brachydanio rerio</name>
    <dbReference type="NCBI Taxonomy" id="7955"/>
    <lineage>
        <taxon>Eukaryota</taxon>
        <taxon>Metazoa</taxon>
        <taxon>Chordata</taxon>
        <taxon>Craniata</taxon>
        <taxon>Vertebrata</taxon>
        <taxon>Euteleostomi</taxon>
        <taxon>Actinopterygii</taxon>
        <taxon>Neopterygii</taxon>
        <taxon>Teleostei</taxon>
        <taxon>Ostariophysi</taxon>
        <taxon>Cypriniformes</taxon>
        <taxon>Danionidae</taxon>
        <taxon>Danioninae</taxon>
        <taxon>Danio</taxon>
    </lineage>
</organism>
<dbReference type="EMBL" id="BC067550">
    <property type="protein sequence ID" value="AAH67550.1"/>
    <property type="molecule type" value="mRNA"/>
</dbReference>
<dbReference type="RefSeq" id="NP_998098.1">
    <property type="nucleotide sequence ID" value="NM_212933.1"/>
</dbReference>
<dbReference type="SMR" id="Q6NWL1"/>
<dbReference type="FunCoup" id="Q6NWL1">
    <property type="interactions" value="720"/>
</dbReference>
<dbReference type="STRING" id="7955.ENSDARP00000021450"/>
<dbReference type="PaxDb" id="7955-ENSDARP00000021450"/>
<dbReference type="DNASU" id="405869"/>
<dbReference type="GeneID" id="405869"/>
<dbReference type="KEGG" id="dre:405869"/>
<dbReference type="AGR" id="ZFIN:ZDB-GENE-040426-2607"/>
<dbReference type="CTD" id="405869"/>
<dbReference type="ZFIN" id="ZDB-GENE-040426-2607">
    <property type="gene designation" value="pdcd10b"/>
</dbReference>
<dbReference type="eggNOG" id="KOG4025">
    <property type="taxonomic scope" value="Eukaryota"/>
</dbReference>
<dbReference type="InParanoid" id="Q6NWL1"/>
<dbReference type="OrthoDB" id="6017654at2759"/>
<dbReference type="PhylomeDB" id="Q6NWL1"/>
<dbReference type="PRO" id="PR:Q6NWL1"/>
<dbReference type="Proteomes" id="UP000000437">
    <property type="component" value="Chromosome 2"/>
</dbReference>
<dbReference type="GO" id="GO:0090443">
    <property type="term" value="C:FAR/SIN/STRIPAK complex"/>
    <property type="evidence" value="ECO:0000318"/>
    <property type="project" value="GO_Central"/>
</dbReference>
<dbReference type="GO" id="GO:0000139">
    <property type="term" value="C:Golgi membrane"/>
    <property type="evidence" value="ECO:0007669"/>
    <property type="project" value="UniProtKB-SubCell"/>
</dbReference>
<dbReference type="GO" id="GO:0005886">
    <property type="term" value="C:plasma membrane"/>
    <property type="evidence" value="ECO:0007669"/>
    <property type="project" value="UniProtKB-SubCell"/>
</dbReference>
<dbReference type="GO" id="GO:0019901">
    <property type="term" value="F:protein kinase binding"/>
    <property type="evidence" value="ECO:0000318"/>
    <property type="project" value="GO_Central"/>
</dbReference>
<dbReference type="GO" id="GO:0001525">
    <property type="term" value="P:angiogenesis"/>
    <property type="evidence" value="ECO:0007669"/>
    <property type="project" value="UniProtKB-KW"/>
</dbReference>
<dbReference type="GO" id="GO:0006915">
    <property type="term" value="P:apoptotic process"/>
    <property type="evidence" value="ECO:0007669"/>
    <property type="project" value="UniProtKB-KW"/>
</dbReference>
<dbReference type="GO" id="GO:0001568">
    <property type="term" value="P:blood vessel development"/>
    <property type="evidence" value="ECO:0000315"/>
    <property type="project" value="ZFIN"/>
</dbReference>
<dbReference type="GO" id="GO:0048514">
    <property type="term" value="P:blood vessel morphogenesis"/>
    <property type="evidence" value="ECO:0000316"/>
    <property type="project" value="ZFIN"/>
</dbReference>
<dbReference type="GO" id="GO:0043009">
    <property type="term" value="P:chordate embryonic development"/>
    <property type="evidence" value="ECO:0000315"/>
    <property type="project" value="ZFIN"/>
</dbReference>
<dbReference type="GO" id="GO:0090168">
    <property type="term" value="P:Golgi reassembly"/>
    <property type="evidence" value="ECO:0000318"/>
    <property type="project" value="GO_Central"/>
</dbReference>
<dbReference type="GO" id="GO:0007507">
    <property type="term" value="P:heart development"/>
    <property type="evidence" value="ECO:0000316"/>
    <property type="project" value="ZFIN"/>
</dbReference>
<dbReference type="GO" id="GO:0003007">
    <property type="term" value="P:heart morphogenesis"/>
    <property type="evidence" value="ECO:0000316"/>
    <property type="project" value="ZFIN"/>
</dbReference>
<dbReference type="GO" id="GO:0001944">
    <property type="term" value="P:vasculature development"/>
    <property type="evidence" value="ECO:0000316"/>
    <property type="project" value="ZFIN"/>
</dbReference>
<dbReference type="FunFam" id="1.20.120.330:FF:000006">
    <property type="entry name" value="Programmed cell death protein 10"/>
    <property type="match status" value="1"/>
</dbReference>
<dbReference type="Gene3D" id="1.10.12.70">
    <property type="match status" value="1"/>
</dbReference>
<dbReference type="Gene3D" id="1.20.120.330">
    <property type="entry name" value="Nucleotidyltransferases domain 2"/>
    <property type="match status" value="1"/>
</dbReference>
<dbReference type="InterPro" id="IPR046409">
    <property type="entry name" value="PDC10_dimerisation_sf"/>
</dbReference>
<dbReference type="InterPro" id="IPR009652">
    <property type="entry name" value="PDCD10"/>
</dbReference>
<dbReference type="InterPro" id="IPR048288">
    <property type="entry name" value="PDCD10_N"/>
</dbReference>
<dbReference type="PANTHER" id="PTHR13250:SF1">
    <property type="entry name" value="PROGRAMMED CELL DEATH PROTEIN 10"/>
    <property type="match status" value="1"/>
</dbReference>
<dbReference type="PANTHER" id="PTHR13250">
    <property type="entry name" value="TF-1 CELL APOPTOSIS RELATED PROTEIN-15"/>
    <property type="match status" value="1"/>
</dbReference>
<dbReference type="Pfam" id="PF06840">
    <property type="entry name" value="PDC10_C"/>
    <property type="match status" value="1"/>
</dbReference>
<dbReference type="Pfam" id="PF20929">
    <property type="entry name" value="PDCD10_N"/>
    <property type="match status" value="1"/>
</dbReference>
<name>PD10B_DANRE</name>
<keyword id="KW-0037">Angiogenesis</keyword>
<keyword id="KW-0053">Apoptosis</keyword>
<keyword id="KW-1003">Cell membrane</keyword>
<keyword id="KW-0963">Cytoplasm</keyword>
<keyword id="KW-0333">Golgi apparatus</keyword>
<keyword id="KW-0472">Membrane</keyword>
<keyword id="KW-1185">Reference proteome</keyword>
<sequence>MTMEEMKNEAEPNSIVSMTLYAVMYPVFNELGRINPSAAQTLRAAFVKAEKENPGLTQDIIMKILEKKNVEINFTESLLRMAADDVEEYLIKRPEQEFQDLNEKARALKHILSKIPDEINDRVRFLQTIKDIASAIKELLDTVNNVFRKYQYQNRRALEHQKKEFVKYSKSFSDTLKTYFKDGKAINVFISANRLIHQTNLILQTFKTVA</sequence>
<protein>
    <recommendedName>
        <fullName>Programmed cell death protein 10-B</fullName>
    </recommendedName>
</protein>
<comment type="function">
    <text evidence="2 3 5">Promotes cell proliferation. Modulates apoptotic pathways. Increases mitogen-activated protein kinase activity. Important for cell migration, and for normal structure and assembly of the Golgi complex. Important for KDR/VEGFR2 signaling. Required for normal angiogenesis, vasculogenesis and hematopoiesis during embryonic development (By similarity). Required for normal cardiovascular development (PubMed:19370760). Promotes cell proliferation. Modulates apoptotic pathways. Increases mitogen-activated protein kinase activity and STK26 activity. Important for cell migration, and for normal structure and assembly of the Golgi complex. Part of the striatin-interacting phosphatase and kinase (STRIPAK) complexes. STRIPAK complexes have critical roles in protein (de)phosphorylation and are regulators of multiple signaling pathways including Hippo, MAPK, nuclear receptor and cytoskeleton remodeling. Different types of STRIPAK complexes are involved in a variety of biological processes such as cell growth, differentiation, apoptosis, metabolism and immune regulation (By similarity).</text>
</comment>
<comment type="subunit">
    <text evidence="5">Interacts (via C-terminus) with CCM2. Interacts (via N-terminus) with STK25 and STK26.</text>
</comment>
<comment type="subcellular location">
    <subcellularLocation>
        <location evidence="3">Cytoplasm</location>
    </subcellularLocation>
    <subcellularLocation>
        <location evidence="1">Golgi apparatus membrane</location>
        <topology evidence="1">Peripheral membrane protein</topology>
        <orientation evidence="1">Cytoplasmic side</orientation>
    </subcellularLocation>
    <subcellularLocation>
        <location evidence="1">Cell membrane</location>
        <topology evidence="1">Peripheral membrane protein</topology>
        <orientation evidence="1">Cytoplasmic side</orientation>
    </subcellularLocation>
</comment>
<comment type="similarity">
    <text evidence="4">Belongs to the PDCD10 family.</text>
</comment>
<reference evidence="6" key="1">
    <citation type="submission" date="2004-03" db="EMBL/GenBank/DDBJ databases">
        <authorList>
            <consortium name="NIH - Zebrafish Gene Collection (ZGC) project"/>
        </authorList>
    </citation>
    <scope>NUCLEOTIDE SEQUENCE [LARGE SCALE MRNA]</scope>
    <source>
        <tissue evidence="6">Kidney</tissue>
    </source>
</reference>
<reference key="2">
    <citation type="journal article" date="2009" name="Hum. Mutat.">
        <title>Functional analyses of human and zebrafish 18-amino acid in-frame deletion pave the way for domain mapping of the cerebral cavernous malformation 3 protein.</title>
        <authorList>
            <person name="Voss K."/>
            <person name="Stahl S."/>
            <person name="Hogan B.M."/>
            <person name="Reinders J."/>
            <person name="Schleider E."/>
            <person name="Schulte-Merker S."/>
            <person name="Felbor U."/>
        </authorList>
    </citation>
    <scope>INTERACTION WITH CCM2; STK25 AND STK26</scope>
    <scope>FUNCTION</scope>
</reference>
<proteinExistence type="evidence at protein level"/>
<accession>Q6NWL1</accession>
<gene>
    <name evidence="7" type="primary">pdcd10b</name>
    <name type="ORF">zgc:85629</name>
</gene>
<feature type="chain" id="PRO_0000320548" description="Programmed cell death protein 10-B">
    <location>
        <begin position="1"/>
        <end position="210"/>
    </location>
</feature>